<keyword id="KW-0067">ATP-binding</keyword>
<keyword id="KW-0143">Chaperone</keyword>
<keyword id="KW-0479">Metal-binding</keyword>
<keyword id="KW-0547">Nucleotide-binding</keyword>
<keyword id="KW-0862">Zinc</keyword>
<name>CLPX_BACC3</name>
<feature type="chain" id="PRO_1000123821" description="ATP-dependent Clp protease ATP-binding subunit ClpX">
    <location>
        <begin position="1"/>
        <end position="419"/>
    </location>
</feature>
<feature type="domain" description="ClpX-type ZB" evidence="2">
    <location>
        <begin position="1"/>
        <end position="54"/>
    </location>
</feature>
<feature type="binding site" evidence="2">
    <location>
        <position position="13"/>
    </location>
    <ligand>
        <name>Zn(2+)</name>
        <dbReference type="ChEBI" id="CHEBI:29105"/>
    </ligand>
</feature>
<feature type="binding site" evidence="2">
    <location>
        <position position="16"/>
    </location>
    <ligand>
        <name>Zn(2+)</name>
        <dbReference type="ChEBI" id="CHEBI:29105"/>
    </ligand>
</feature>
<feature type="binding site" evidence="2">
    <location>
        <position position="35"/>
    </location>
    <ligand>
        <name>Zn(2+)</name>
        <dbReference type="ChEBI" id="CHEBI:29105"/>
    </ligand>
</feature>
<feature type="binding site" evidence="2">
    <location>
        <position position="38"/>
    </location>
    <ligand>
        <name>Zn(2+)</name>
        <dbReference type="ChEBI" id="CHEBI:29105"/>
    </ligand>
</feature>
<feature type="binding site" evidence="1">
    <location>
        <begin position="117"/>
        <end position="124"/>
    </location>
    <ligand>
        <name>ATP</name>
        <dbReference type="ChEBI" id="CHEBI:30616"/>
    </ligand>
</feature>
<protein>
    <recommendedName>
        <fullName evidence="1">ATP-dependent Clp protease ATP-binding subunit ClpX</fullName>
    </recommendedName>
</protein>
<proteinExistence type="inferred from homology"/>
<dbReference type="EMBL" id="CP001407">
    <property type="protein sequence ID" value="ACO27713.1"/>
    <property type="molecule type" value="Genomic_DNA"/>
</dbReference>
<dbReference type="RefSeq" id="WP_000472282.1">
    <property type="nucleotide sequence ID" value="NZ_CP009318.1"/>
</dbReference>
<dbReference type="SMR" id="C1ETR8"/>
<dbReference type="GeneID" id="75087607"/>
<dbReference type="KEGG" id="bcx:BCA_4584"/>
<dbReference type="PATRIC" id="fig|572264.18.peg.4532"/>
<dbReference type="Proteomes" id="UP000002210">
    <property type="component" value="Chromosome"/>
</dbReference>
<dbReference type="GO" id="GO:0009376">
    <property type="term" value="C:HslUV protease complex"/>
    <property type="evidence" value="ECO:0007669"/>
    <property type="project" value="TreeGrafter"/>
</dbReference>
<dbReference type="GO" id="GO:0005524">
    <property type="term" value="F:ATP binding"/>
    <property type="evidence" value="ECO:0007669"/>
    <property type="project" value="UniProtKB-UniRule"/>
</dbReference>
<dbReference type="GO" id="GO:0016887">
    <property type="term" value="F:ATP hydrolysis activity"/>
    <property type="evidence" value="ECO:0007669"/>
    <property type="project" value="InterPro"/>
</dbReference>
<dbReference type="GO" id="GO:0140662">
    <property type="term" value="F:ATP-dependent protein folding chaperone"/>
    <property type="evidence" value="ECO:0007669"/>
    <property type="project" value="InterPro"/>
</dbReference>
<dbReference type="GO" id="GO:0046983">
    <property type="term" value="F:protein dimerization activity"/>
    <property type="evidence" value="ECO:0007669"/>
    <property type="project" value="InterPro"/>
</dbReference>
<dbReference type="GO" id="GO:0051082">
    <property type="term" value="F:unfolded protein binding"/>
    <property type="evidence" value="ECO:0007669"/>
    <property type="project" value="UniProtKB-UniRule"/>
</dbReference>
<dbReference type="GO" id="GO:0008270">
    <property type="term" value="F:zinc ion binding"/>
    <property type="evidence" value="ECO:0007669"/>
    <property type="project" value="InterPro"/>
</dbReference>
<dbReference type="GO" id="GO:0051301">
    <property type="term" value="P:cell division"/>
    <property type="evidence" value="ECO:0007669"/>
    <property type="project" value="TreeGrafter"/>
</dbReference>
<dbReference type="GO" id="GO:0051603">
    <property type="term" value="P:proteolysis involved in protein catabolic process"/>
    <property type="evidence" value="ECO:0007669"/>
    <property type="project" value="TreeGrafter"/>
</dbReference>
<dbReference type="CDD" id="cd19497">
    <property type="entry name" value="RecA-like_ClpX"/>
    <property type="match status" value="1"/>
</dbReference>
<dbReference type="FunFam" id="1.10.8.60:FF:000002">
    <property type="entry name" value="ATP-dependent Clp protease ATP-binding subunit ClpX"/>
    <property type="match status" value="1"/>
</dbReference>
<dbReference type="FunFam" id="3.40.50.300:FF:000005">
    <property type="entry name" value="ATP-dependent Clp protease ATP-binding subunit ClpX"/>
    <property type="match status" value="1"/>
</dbReference>
<dbReference type="Gene3D" id="1.10.8.60">
    <property type="match status" value="1"/>
</dbReference>
<dbReference type="Gene3D" id="6.20.220.10">
    <property type="entry name" value="ClpX chaperone, C4-type zinc finger domain"/>
    <property type="match status" value="1"/>
</dbReference>
<dbReference type="Gene3D" id="3.40.50.300">
    <property type="entry name" value="P-loop containing nucleotide triphosphate hydrolases"/>
    <property type="match status" value="1"/>
</dbReference>
<dbReference type="HAMAP" id="MF_00175">
    <property type="entry name" value="ClpX"/>
    <property type="match status" value="1"/>
</dbReference>
<dbReference type="InterPro" id="IPR003593">
    <property type="entry name" value="AAA+_ATPase"/>
</dbReference>
<dbReference type="InterPro" id="IPR050052">
    <property type="entry name" value="ATP-dep_Clp_protease_ClpX"/>
</dbReference>
<dbReference type="InterPro" id="IPR003959">
    <property type="entry name" value="ATPase_AAA_core"/>
</dbReference>
<dbReference type="InterPro" id="IPR019489">
    <property type="entry name" value="Clp_ATPase_C"/>
</dbReference>
<dbReference type="InterPro" id="IPR004487">
    <property type="entry name" value="Clp_protease_ATP-bd_su_ClpX"/>
</dbReference>
<dbReference type="InterPro" id="IPR046425">
    <property type="entry name" value="ClpX_bact"/>
</dbReference>
<dbReference type="InterPro" id="IPR027417">
    <property type="entry name" value="P-loop_NTPase"/>
</dbReference>
<dbReference type="InterPro" id="IPR010603">
    <property type="entry name" value="Znf_CppX_C4"/>
</dbReference>
<dbReference type="InterPro" id="IPR038366">
    <property type="entry name" value="Znf_CppX_C4_sf"/>
</dbReference>
<dbReference type="NCBIfam" id="TIGR00382">
    <property type="entry name" value="clpX"/>
    <property type="match status" value="1"/>
</dbReference>
<dbReference type="NCBIfam" id="NF003745">
    <property type="entry name" value="PRK05342.1"/>
    <property type="match status" value="1"/>
</dbReference>
<dbReference type="PANTHER" id="PTHR48102:SF7">
    <property type="entry name" value="ATP-DEPENDENT CLP PROTEASE ATP-BINDING SUBUNIT CLPX-LIKE, MITOCHONDRIAL"/>
    <property type="match status" value="1"/>
</dbReference>
<dbReference type="PANTHER" id="PTHR48102">
    <property type="entry name" value="ATP-DEPENDENT CLP PROTEASE ATP-BINDING SUBUNIT CLPX-LIKE, MITOCHONDRIAL-RELATED"/>
    <property type="match status" value="1"/>
</dbReference>
<dbReference type="Pfam" id="PF07724">
    <property type="entry name" value="AAA_2"/>
    <property type="match status" value="1"/>
</dbReference>
<dbReference type="Pfam" id="PF10431">
    <property type="entry name" value="ClpB_D2-small"/>
    <property type="match status" value="1"/>
</dbReference>
<dbReference type="Pfam" id="PF06689">
    <property type="entry name" value="zf-C4_ClpX"/>
    <property type="match status" value="1"/>
</dbReference>
<dbReference type="SMART" id="SM00382">
    <property type="entry name" value="AAA"/>
    <property type="match status" value="1"/>
</dbReference>
<dbReference type="SMART" id="SM01086">
    <property type="entry name" value="ClpB_D2-small"/>
    <property type="match status" value="1"/>
</dbReference>
<dbReference type="SMART" id="SM00994">
    <property type="entry name" value="zf-C4_ClpX"/>
    <property type="match status" value="1"/>
</dbReference>
<dbReference type="SUPFAM" id="SSF57716">
    <property type="entry name" value="Glucocorticoid receptor-like (DNA-binding domain)"/>
    <property type="match status" value="1"/>
</dbReference>
<dbReference type="SUPFAM" id="SSF52540">
    <property type="entry name" value="P-loop containing nucleoside triphosphate hydrolases"/>
    <property type="match status" value="1"/>
</dbReference>
<dbReference type="PROSITE" id="PS51902">
    <property type="entry name" value="CLPX_ZB"/>
    <property type="match status" value="1"/>
</dbReference>
<accession>C1ETR8</accession>
<gene>
    <name evidence="1" type="primary">clpX</name>
    <name type="ordered locus">BCA_4584</name>
</gene>
<organism>
    <name type="scientific">Bacillus cereus (strain 03BB102)</name>
    <dbReference type="NCBI Taxonomy" id="572264"/>
    <lineage>
        <taxon>Bacteria</taxon>
        <taxon>Bacillati</taxon>
        <taxon>Bacillota</taxon>
        <taxon>Bacilli</taxon>
        <taxon>Bacillales</taxon>
        <taxon>Bacillaceae</taxon>
        <taxon>Bacillus</taxon>
        <taxon>Bacillus cereus group</taxon>
    </lineage>
</organism>
<evidence type="ECO:0000255" key="1">
    <source>
        <dbReference type="HAMAP-Rule" id="MF_00175"/>
    </source>
</evidence>
<evidence type="ECO:0000255" key="2">
    <source>
        <dbReference type="PROSITE-ProRule" id="PRU01250"/>
    </source>
</evidence>
<reference key="1">
    <citation type="submission" date="2009-02" db="EMBL/GenBank/DDBJ databases">
        <title>Genome sequence of Bacillus cereus 03BB102.</title>
        <authorList>
            <person name="Dodson R.J."/>
            <person name="Jackson P."/>
            <person name="Munk A.C."/>
            <person name="Brettin T."/>
            <person name="Bruce D."/>
            <person name="Detter C."/>
            <person name="Tapia R."/>
            <person name="Han C."/>
            <person name="Sutton G."/>
            <person name="Sims D."/>
        </authorList>
    </citation>
    <scope>NUCLEOTIDE SEQUENCE [LARGE SCALE GENOMIC DNA]</scope>
    <source>
        <strain>03BB102</strain>
    </source>
</reference>
<comment type="function">
    <text evidence="1">ATP-dependent specificity component of the Clp protease. It directs the protease to specific substrates. Can perform chaperone functions in the absence of ClpP.</text>
</comment>
<comment type="subunit">
    <text evidence="1">Component of the ClpX-ClpP complex. Forms a hexameric ring that, in the presence of ATP, binds to fourteen ClpP subunits assembled into a disk-like structure with a central cavity, resembling the structure of eukaryotic proteasomes.</text>
</comment>
<comment type="similarity">
    <text evidence="1">Belongs to the ClpX chaperone family.</text>
</comment>
<sequence>MFKFNDEKGQLKCSFCGKTQTQVRKLVAGPGVYICDECIELCTEIVQEELAKDEEVEFKDVPKPVEIREILDEYVIGQDNAKKALAVAVYNHYKRINSNSKIDDVELAKSNIALIGPTGSGKTLLAQTLARILNVPFAIADATSLTEAGYVGEDVENILLKLIQAADYDVEKAEKGIIYIDEIDKVARKSENPSITRDVSGEGVQQALLKILEGTVASVPPQGGRKHPHQEFIQIDTTNILFICGGAFDGIEPIIKRRLGEKVIGFGSEKKNADVNEKHVLSHVLPEDLLRFGLIPEFIGRLPVIANLEPLDEDALVDILTKPKNALVKQFQKLLELDDVELEFEEGALIEIAKKAIERKTGARGLRSIIEGLMLEVMFELPSRKDIEKCILTKETVADNAAPKLVLQDGTVLDTKTSA</sequence>